<evidence type="ECO:0000250" key="1">
    <source>
        <dbReference type="UniProtKB" id="O95168"/>
    </source>
</evidence>
<evidence type="ECO:0000250" key="2">
    <source>
        <dbReference type="UniProtKB" id="P48305"/>
    </source>
</evidence>
<evidence type="ECO:0000255" key="3"/>
<evidence type="ECO:0000256" key="4">
    <source>
        <dbReference type="SAM" id="MobiDB-lite"/>
    </source>
</evidence>
<evidence type="ECO:0000305" key="5"/>
<name>NDUB4_PONAB</name>
<dbReference type="EMBL" id="DQ885701">
    <property type="protein sequence ID" value="ABH12210.1"/>
    <property type="molecule type" value="mRNA"/>
</dbReference>
<dbReference type="SMR" id="P0CB72"/>
<dbReference type="FunCoup" id="P0CB72">
    <property type="interactions" value="976"/>
</dbReference>
<dbReference type="STRING" id="9601.ENSPPYP00000015101"/>
<dbReference type="eggNOG" id="ENOG502S2HF">
    <property type="taxonomic scope" value="Eukaryota"/>
</dbReference>
<dbReference type="InParanoid" id="P0CB72"/>
<dbReference type="Proteomes" id="UP000001595">
    <property type="component" value="Unplaced"/>
</dbReference>
<dbReference type="GO" id="GO:0005743">
    <property type="term" value="C:mitochondrial inner membrane"/>
    <property type="evidence" value="ECO:0007669"/>
    <property type="project" value="UniProtKB-SubCell"/>
</dbReference>
<dbReference type="GO" id="GO:0045271">
    <property type="term" value="C:respiratory chain complex I"/>
    <property type="evidence" value="ECO:0000250"/>
    <property type="project" value="UniProtKB"/>
</dbReference>
<dbReference type="InterPro" id="IPR009866">
    <property type="entry name" value="NADH_UbQ_OxRdtase_NDUFB4_su"/>
</dbReference>
<dbReference type="PANTHER" id="PTHR15469:SF1">
    <property type="entry name" value="NADH DEHYDROGENASE [UBIQUINONE] 1 BETA SUBCOMPLEX SUBUNIT 4"/>
    <property type="match status" value="1"/>
</dbReference>
<dbReference type="PANTHER" id="PTHR15469">
    <property type="entry name" value="NADH-UBIQUINONE OXIDOREDUCTASE B15 SUBUNIT"/>
    <property type="match status" value="1"/>
</dbReference>
<dbReference type="Pfam" id="PF07225">
    <property type="entry name" value="NDUF_B4"/>
    <property type="match status" value="1"/>
</dbReference>
<gene>
    <name type="primary">NDUFB4</name>
</gene>
<sequence>MSFPKYKPSRLSPLPETLDPAEYNISPETRRAQAERLAIRAQLKREYLLQYNDPNRRGLIENPALLRWAYARTTNVYPNFRPTPKNSLMGALYGFGPLIFIYYIIKTERDRKEKLIQEGKLDRTFHLSY</sequence>
<reference key="1">
    <citation type="journal article" date="2006" name="Gene">
        <title>Adaptive selection of mitochondrial complex I subunits during primate radiation.</title>
        <authorList>
            <person name="Mishmar D."/>
            <person name="Ruiz-Pesini E."/>
            <person name="Mondragon-Palomino M."/>
            <person name="Procaccio V."/>
            <person name="Gaut B."/>
            <person name="Wallace D.C."/>
        </authorList>
    </citation>
    <scope>NUCLEOTIDE SEQUENCE [MRNA]</scope>
</reference>
<accession>P0CB72</accession>
<accession>Q0MQD3</accession>
<accession>Q5R6P3</accession>
<proteinExistence type="evidence at transcript level"/>
<organism>
    <name type="scientific">Pongo abelii</name>
    <name type="common">Sumatran orangutan</name>
    <name type="synonym">Pongo pygmaeus abelii</name>
    <dbReference type="NCBI Taxonomy" id="9601"/>
    <lineage>
        <taxon>Eukaryota</taxon>
        <taxon>Metazoa</taxon>
        <taxon>Chordata</taxon>
        <taxon>Craniata</taxon>
        <taxon>Vertebrata</taxon>
        <taxon>Euteleostomi</taxon>
        <taxon>Mammalia</taxon>
        <taxon>Eutheria</taxon>
        <taxon>Euarchontoglires</taxon>
        <taxon>Primates</taxon>
        <taxon>Haplorrhini</taxon>
        <taxon>Catarrhini</taxon>
        <taxon>Hominidae</taxon>
        <taxon>Pongo</taxon>
    </lineage>
</organism>
<feature type="initiator methionine" description="Removed" evidence="2">
    <location>
        <position position="1"/>
    </location>
</feature>
<feature type="chain" id="PRO_0000234084" description="NADH dehydrogenase [ubiquinone] 1 beta subcomplex subunit 4">
    <location>
        <begin position="2"/>
        <end position="129"/>
    </location>
</feature>
<feature type="transmembrane region" description="Helical" evidence="3">
    <location>
        <begin position="88"/>
        <end position="105"/>
    </location>
</feature>
<feature type="region of interest" description="Disordered" evidence="4">
    <location>
        <begin position="1"/>
        <end position="26"/>
    </location>
</feature>
<feature type="modified residue" description="N-acetylserine" evidence="2">
    <location>
        <position position="2"/>
    </location>
</feature>
<feature type="modified residue" description="Phosphoserine" evidence="1">
    <location>
        <position position="26"/>
    </location>
</feature>
<comment type="function">
    <text evidence="1">Accessory subunit of the mitochondrial membrane respiratory chain NADH dehydrogenase (Complex I), that is believed not to be involved in catalysis. Complex I functions in the transfer of electrons from NADH to the respiratory chain. The immediate electron acceptor for the enzyme is believed to be ubiquinone.</text>
</comment>
<comment type="subunit">
    <text evidence="1">Complex I is composed of 45 different subunits.</text>
</comment>
<comment type="subcellular location">
    <subcellularLocation>
        <location evidence="1">Mitochondrion inner membrane</location>
        <topology evidence="3">Single-pass membrane protein</topology>
        <orientation evidence="1">Matrix side</orientation>
    </subcellularLocation>
</comment>
<comment type="similarity">
    <text evidence="5">Belongs to the complex I NDUFB4 subunit family.</text>
</comment>
<keyword id="KW-0007">Acetylation</keyword>
<keyword id="KW-0249">Electron transport</keyword>
<keyword id="KW-0472">Membrane</keyword>
<keyword id="KW-0496">Mitochondrion</keyword>
<keyword id="KW-0999">Mitochondrion inner membrane</keyword>
<keyword id="KW-0597">Phosphoprotein</keyword>
<keyword id="KW-1185">Reference proteome</keyword>
<keyword id="KW-0679">Respiratory chain</keyword>
<keyword id="KW-0812">Transmembrane</keyword>
<keyword id="KW-1133">Transmembrane helix</keyword>
<keyword id="KW-0813">Transport</keyword>
<protein>
    <recommendedName>
        <fullName>NADH dehydrogenase [ubiquinone] 1 beta subcomplex subunit 4</fullName>
    </recommendedName>
    <alternativeName>
        <fullName>Complex I-B15</fullName>
        <shortName>CI-B15</shortName>
    </alternativeName>
    <alternativeName>
        <fullName>NADH-ubiquinone oxidoreductase B15 subunit</fullName>
    </alternativeName>
</protein>